<gene>
    <name type="primary">VCL</name>
    <name type="synonym">VINC1</name>
</gene>
<organism>
    <name type="scientific">Gallus gallus</name>
    <name type="common">Chicken</name>
    <dbReference type="NCBI Taxonomy" id="9031"/>
    <lineage>
        <taxon>Eukaryota</taxon>
        <taxon>Metazoa</taxon>
        <taxon>Chordata</taxon>
        <taxon>Craniata</taxon>
        <taxon>Vertebrata</taxon>
        <taxon>Euteleostomi</taxon>
        <taxon>Archelosauria</taxon>
        <taxon>Archosauria</taxon>
        <taxon>Dinosauria</taxon>
        <taxon>Saurischia</taxon>
        <taxon>Theropoda</taxon>
        <taxon>Coelurosauria</taxon>
        <taxon>Aves</taxon>
        <taxon>Neognathae</taxon>
        <taxon>Galloanserae</taxon>
        <taxon>Galliformes</taxon>
        <taxon>Phasianidae</taxon>
        <taxon>Phasianinae</taxon>
        <taxon>Gallus</taxon>
    </lineage>
</organism>
<evidence type="ECO:0000250" key="1">
    <source>
        <dbReference type="UniProtKB" id="P18206"/>
    </source>
</evidence>
<evidence type="ECO:0000250" key="2">
    <source>
        <dbReference type="UniProtKB" id="P26234"/>
    </source>
</evidence>
<evidence type="ECO:0000250" key="3">
    <source>
        <dbReference type="UniProtKB" id="P85972"/>
    </source>
</evidence>
<evidence type="ECO:0000250" key="4">
    <source>
        <dbReference type="UniProtKB" id="Q64727"/>
    </source>
</evidence>
<evidence type="ECO:0000255" key="5"/>
<evidence type="ECO:0000256" key="6">
    <source>
        <dbReference type="SAM" id="MobiDB-lite"/>
    </source>
</evidence>
<evidence type="ECO:0000269" key="7">
    <source>
    </source>
</evidence>
<evidence type="ECO:0000269" key="8">
    <source>
    </source>
</evidence>
<evidence type="ECO:0000269" key="9">
    <source>
    </source>
</evidence>
<evidence type="ECO:0000269" key="10">
    <source>
    </source>
</evidence>
<evidence type="ECO:0000269" key="11">
    <source>
    </source>
</evidence>
<evidence type="ECO:0000269" key="12">
    <source>
    </source>
</evidence>
<evidence type="ECO:0000269" key="13">
    <source>
    </source>
</evidence>
<evidence type="ECO:0000269" key="14">
    <source>
    </source>
</evidence>
<evidence type="ECO:0000303" key="15">
    <source>
    </source>
</evidence>
<evidence type="ECO:0000303" key="16">
    <source>
    </source>
</evidence>
<evidence type="ECO:0000305" key="17"/>
<evidence type="ECO:0000305" key="18">
    <source>
    </source>
</evidence>
<evidence type="ECO:0007829" key="19">
    <source>
        <dbReference type="PDB" id="1QKR"/>
    </source>
</evidence>
<evidence type="ECO:0007829" key="20">
    <source>
        <dbReference type="PDB" id="1ST6"/>
    </source>
</evidence>
<evidence type="ECO:0007829" key="21">
    <source>
        <dbReference type="PDB" id="1T01"/>
    </source>
</evidence>
<evidence type="ECO:0007829" key="22">
    <source>
        <dbReference type="PDB" id="1ZVZ"/>
    </source>
</evidence>
<evidence type="ECO:0007829" key="23">
    <source>
        <dbReference type="PDB" id="3ZDL"/>
    </source>
</evidence>
<evidence type="ECO:0007829" key="24">
    <source>
        <dbReference type="PDB" id="6NR7"/>
    </source>
</evidence>
<keyword id="KW-0002">3D-structure</keyword>
<keyword id="KW-0009">Actin-binding</keyword>
<keyword id="KW-0025">Alternative splicing</keyword>
<keyword id="KW-0130">Cell adhesion</keyword>
<keyword id="KW-0965">Cell junction</keyword>
<keyword id="KW-1003">Cell membrane</keyword>
<keyword id="KW-0966">Cell projection</keyword>
<keyword id="KW-0963">Cytoplasm</keyword>
<keyword id="KW-0206">Cytoskeleton</keyword>
<keyword id="KW-0449">Lipoprotein</keyword>
<keyword id="KW-0472">Membrane</keyword>
<keyword id="KW-0519">Myristate</keyword>
<keyword id="KW-0564">Palmitate</keyword>
<keyword id="KW-0597">Phosphoprotein</keyword>
<keyword id="KW-1185">Reference proteome</keyword>
<keyword id="KW-0677">Repeat</keyword>
<accession>P12003</accession>
<accession>Q91024</accession>
<name>VINC_CHICK</name>
<sequence length="1135" mass="124560">MPVFHTRTIESILEPVAQQISHLVIMHEEGEVDGKAIPDLTAPVSAVQAAVSNLVRVGKETVQTTEDQILKRDMPPAFIKVENACTKLVRAAQMLQADPYSVPARDYLIDGSRGILSGTSDLLLTFDEAEVRKIIRVCKGILEYLTVAEVVETMEDLVTYTKNLGPGMTKMAKMIDERQQELTHQEHRVMLVNSMNTVKELLPVLISAMKIFVTTKNTKSQGIEEALKNRNFTVEKMSAEINEIIRVLQLTSWDEDAWASKDTEAMKRALALIDSKMNQAKGWLRDPNAPPGDAGEQAIRQILDEAGKAGELCAGKERREILGTCKTLGQMTDQLADLRARGQGATPMAMQKAQQVSQGLDLLTAKVENAARKLEAMTNSKQAIAKKIDAAQNWLADPNGGSEGEEHIRGIMSEARKVAELCEEPKERDDILRSLGEISALTAKLSDLRRHGKGDSPEARALAKQIATSLQNLQSKTNRAVANTRPVKAAVHLEGKIEQAQRWIDNPTVDDRGVGQAAIRGLVAEGRRLANVMMGPYRQDLLAKCDRVDQLAAQLADLAARGEGESPQARAIAAQLQDSLKDLKARMQEAMTQEVSDVFSDTTTPIKLLAVAATAPSDTPNREEVFEERAANFENHAARLGATAEKAAAVGTANKTTVEGIQATVKSARELTPQVVSAARILLRNPGNQAAYEHFETMKNQWIDNVEKMTGLVDEAIDTKSLLDASEEAIKKDLDKCKVAMANMQPQMLVAGATSIARRANRILLVAKREVENSEDPKFREAVKAASDELSKTISPMVMDAKAVAGNISDPGLQKSFLDSGYRILGAVAKVREAFQPQEPDFPPPPPDLEHLHLTDELAPPKPPLPEGEVPPPRPPPPEEKDEEFPEQKAGEAINQPMMMAARQLHDEARKWSSKPVTVINEAAEAGVDIDEEDDADVEFSLPSDIEDDYEPELLLMPTNQPVNQPILAAAQSLHREATKWSSKGNDIIAAAKRMALLMAEMSRLVRGGSGNKRALIQCAKDIAKASDEVTRLAKEVAKQCTDKRIRTNLLQVCERIPTISTQLKILSTVKATMLGRTNISDEESEQATEMLVHNAQNLMQSVKETVREAEAASIKIRTDAGFTLRWVRKTPWYQ</sequence>
<proteinExistence type="evidence at protein level"/>
<comment type="function">
    <text evidence="8 9 10">Actin filament (F-actin)-binding protein involved in cell-matrix adhesion and cell-cell adhesion. Regulates cell-surface E-cadherin expression and potentiates mechanosensing by the E-cadherin complex. May also play important roles in cell morphology and locomotion.</text>
</comment>
<comment type="subunit">
    <text evidence="7 9 11 12">Exhibits self-association properties. Interacts with APBB1IP, NRAP and TLN1. Interacts with CTNNB1 and this interaction is necessary for its localization to the cell-cell junctions and for its function in regulating cell surface expression of E-cadherin.</text>
</comment>
<comment type="interaction">
    <interactant intactId="EBI-1039563">
        <id>P12003</id>
    </interactant>
    <interactant intactId="EBI-6049246">
        <id>P05094-2</id>
        <label>ACTN1</label>
    </interactant>
    <organismsDiffer>false</organismsDiffer>
    <experiments>5</experiments>
</comment>
<comment type="interaction">
    <interactant intactId="EBI-1039563">
        <id>P12003</id>
    </interactant>
    <interactant intactId="EBI-2896280">
        <id>P49024</id>
        <label>PXN</label>
    </interactant>
    <organismsDiffer>false</organismsDiffer>
    <experiments>5</experiments>
</comment>
<comment type="interaction">
    <interactant intactId="EBI-1039563">
        <id>P12003</id>
    </interactant>
    <interactant intactId="EBI-1039593">
        <id>P26039</id>
        <label>Tln1</label>
    </interactant>
    <organismsDiffer>true</organismsDiffer>
    <experiments>5</experiments>
</comment>
<comment type="interaction">
    <interactant intactId="EBI-1039563">
        <id>P12003</id>
    </interactant>
    <interactant intactId="EBI-748201">
        <id>P50552</id>
        <label>VASP</label>
    </interactant>
    <organismsDiffer>true</organismsDiffer>
    <experiments>2</experiments>
</comment>
<comment type="interaction">
    <interactant intactId="EBI-6138078">
        <id>P12003-1</id>
    </interactant>
    <interactant intactId="EBI-2896280">
        <id>P49024</id>
        <label>PXN</label>
    </interactant>
    <organismsDiffer>false</organismsDiffer>
    <experiments>2</experiments>
</comment>
<comment type="interaction">
    <interactant intactId="EBI-6138078">
        <id>P12003-1</id>
    </interactant>
    <interactant intactId="EBI-367540">
        <id>P68135</id>
        <label>ACTA1</label>
    </interactant>
    <organismsDiffer>true</organismsDiffer>
    <experiments>2</experiments>
</comment>
<comment type="interaction">
    <interactant intactId="EBI-6138096">
        <id>P12003-2</id>
    </interactant>
    <interactant intactId="EBI-2896280">
        <id>P49024</id>
        <label>PXN</label>
    </interactant>
    <organismsDiffer>false</organismsDiffer>
    <experiments>2</experiments>
</comment>
<comment type="subcellular location">
    <subcellularLocation>
        <location evidence="10">Cell membrane</location>
        <topology evidence="18">Peripheral membrane protein</topology>
        <orientation evidence="18">Cytoplasmic side</orientation>
    </subcellularLocation>
    <subcellularLocation>
        <location evidence="9 10">Cell junction</location>
        <location evidence="9 10">Adherens junction</location>
    </subcellularLocation>
    <subcellularLocation>
        <location evidence="9">Cell junction</location>
        <location evidence="9">Focal adhesion</location>
    </subcellularLocation>
    <subcellularLocation>
        <location evidence="3">Cytoplasm</location>
        <location evidence="3">Cytoskeleton</location>
    </subcellularLocation>
    <subcellularLocation>
        <location evidence="4">Cell membrane</location>
        <location evidence="4">Sarcolemma</location>
        <topology evidence="4">Peripheral membrane protein</topology>
        <orientation evidence="4">Cytoplasmic side</orientation>
    </subcellularLocation>
    <subcellularLocation>
        <location evidence="4">Cell projection</location>
        <location evidence="4">Podosome</location>
    </subcellularLocation>
    <text evidence="9 10">Recruitment to cell-cell junctions occurs in a myosin II-dependent manner (PubMed:20584916). Interaction with CTNNB1 is necessary for its localization to the cell-cell junctions (PubMed:20086044).</text>
</comment>
<comment type="alternative products">
    <event type="alternative splicing"/>
    <isoform>
        <id>P12003-2</id>
        <name>2</name>
        <name>Metavinculin</name>
        <sequence type="displayed"/>
    </isoform>
    <isoform>
        <id>P12003-1</id>
        <name>1</name>
        <name>Vinculin</name>
        <sequence type="described" ref="VSP_010772"/>
    </isoform>
</comment>
<comment type="tissue specificity">
    <text>Isoform Metavinculin is muscle-specific.</text>
</comment>
<comment type="domain">
    <text evidence="1">Exists in at least two conformations. When in the closed, 'inactive' conformation, extensive interactions between the head and tail domains prevent detectable binding to most of its ligands. It takes on an 'active' conformation after cooperative and simultaneous binding of two different ligands. This activation involves displacement of the head-tail interactions and leads to a significant accumulation of ternary complexes. The active form then binds a number of proteins that have both signaling and structural roles that are essential for cell adhesion.</text>
</comment>
<comment type="domain">
    <text evidence="1">The N-terminal globular head (Vh) comprises of subdomains D1-D4. The C-terminal tail (Vt) binds F-actin and cross-links actin filaments into bundles. An intramolecular interaction between Vh and Vt masks the F-actin-binding domain located in Vt. The binding of talin and alpha-actinin to the D1 subdomain of vinculin induces a helical bundle conversion of this subdomain, leading to the disruption of the intramolecular interaction and the exposure of the cryptic F-actin-binding domain of Vt. Vt inhibits actin filament barbed end elongation without affecting the critical concentration of actin assembly.</text>
</comment>
<comment type="PTM">
    <text evidence="8">Phosphorylated; on serines, threonines and tyrosines. Phosphorylation on Tyr-1134 in activated platelets affects head-tail interactions and cell spreading but has no effect on actin binding nor on localization to focal adhesion plaques.</text>
</comment>
<comment type="PTM">
    <text evidence="14">Acetylated; mainly by myristic acid but also by a small amount of palmitic acid.</text>
</comment>
<comment type="similarity">
    <text evidence="17">Belongs to the vinculin/alpha-catenin family.</text>
</comment>
<reference key="1">
    <citation type="journal article" date="1988" name="Proc. Natl. Acad. Sci. U.S.A.">
        <title>cDNA-derived sequence of chicken embryo vinculin.</title>
        <authorList>
            <person name="Coutu M.D."/>
            <person name="Craig S.W."/>
        </authorList>
    </citation>
    <scope>NUCLEOTIDE SEQUENCE [MRNA] (ISOFORM 1)</scope>
    <source>
        <tissue>Embryo</tissue>
    </source>
</reference>
<reference key="2">
    <citation type="journal article" date="1989" name="Biochem. J.">
        <title>Primary sequence and domain structure of chicken vinculin.</title>
        <authorList>
            <person name="Price G.J."/>
            <person name="Jones P."/>
            <person name="Davison M.D."/>
            <person name="Patel B."/>
            <person name="Bendori R."/>
            <person name="Geiger B."/>
            <person name="Critchley D.R."/>
        </authorList>
    </citation>
    <scope>NUCLEOTIDE SEQUENCE [MRNA] (ISOFORM 1)</scope>
    <source>
        <tissue>Embryo</tissue>
    </source>
</reference>
<reference key="3">
    <citation type="journal article" date="1992" name="J. Biol. Chem.">
        <title>Chicken vinculin and meta-vinculin are derived from a single gene by alternative splicing of a 207-base pair exon unique to meta-vinculin.</title>
        <authorList>
            <person name="Byrne B.J."/>
            <person name="Kaczorowski Y.J."/>
            <person name="Coutu M.D."/>
            <person name="Craig S.W."/>
        </authorList>
    </citation>
    <scope>NUCLEOTIDE SEQUENCE [GENOMIC DNA]</scope>
    <scope>ALTERNATIVE SPLICING (ISOFORM 2)</scope>
</reference>
<reference key="4">
    <citation type="journal article" date="1987" name="Biochem. J.">
        <title>Isolation and characterization of a vinculin cDNA from chick-embryo fibroblasts.</title>
        <authorList>
            <person name="Price G.J."/>
            <person name="Jones P."/>
            <person name="Davison M.D."/>
            <person name="Patel B."/>
            <person name="Eperon I.C."/>
            <person name="Critchley D.R."/>
        </authorList>
    </citation>
    <scope>NUCLEOTIDE SEQUENCE [MRNA] OF 1-881</scope>
    <source>
        <tissue>Embryo</tissue>
    </source>
</reference>
<reference key="5">
    <citation type="journal article" date="1987" name="FEBS Lett.">
        <title>The cytoskeletal protein vinculin is acylated by myristic acid.</title>
        <authorList>
            <person name="Kellie S."/>
            <person name="Wigglesworth N.M."/>
        </authorList>
    </citation>
    <scope>ACETYLATION</scope>
</reference>
<reference key="6">
    <citation type="journal article" date="1989" name="J. Cell Biol.">
        <title>Identification of a talin binding site in the cytoskeletal protein vinculin.</title>
        <authorList>
            <person name="Jones P."/>
            <person name="Jackson P."/>
            <person name="Price G.J."/>
            <person name="Patel B."/>
            <person name="Ohanion V."/>
            <person name="Lear A.L."/>
            <person name="Critchley D.R."/>
        </authorList>
    </citation>
    <scope>TALIN INTERACTION DOMAIN</scope>
</reference>
<reference key="7">
    <citation type="journal article" date="1999" name="Biochemistry">
        <title>Molecular interactions of N-RAP, a nebulin-related protein of striated muscle myotendon junctions and intercalated disks.</title>
        <authorList>
            <person name="Luo G."/>
            <person name="Herrera A.H."/>
            <person name="Horowits R."/>
        </authorList>
    </citation>
    <scope>INTERACTION WITH NRAP</scope>
</reference>
<reference key="8">
    <citation type="journal article" date="2004" name="Mol. Biol. Cell">
        <title>The phosphorylation of vinculin on tyrosine residues 100 and 1065, mediated by SRC kinases, affects cell spreading.</title>
        <authorList>
            <person name="Zhang Z."/>
            <person name="Izaguirre G."/>
            <person name="Lin S.-Y."/>
            <person name="Lee H.Y."/>
            <person name="Schaefer E."/>
            <person name="Haimovich B."/>
        </authorList>
    </citation>
    <scope>PHOSPHORYLATION AT TYR-100 AND TYR-1134</scope>
    <scope>FUNCTION</scope>
    <scope>MUTAGENESIS OF TYR-100; TYR-160; TYR-537; TYR-692; TYR-822 AND TYR-1134</scope>
</reference>
<reference key="9">
    <citation type="journal article" date="2010" name="J. Biol. Chem.">
        <title>Central region of talin has a unique fold that binds vinculin and actin.</title>
        <authorList>
            <person name="Gingras A.R."/>
            <person name="Bate N."/>
            <person name="Goult B.T."/>
            <person name="Patel B."/>
            <person name="Kopp P.M."/>
            <person name="Emsley J."/>
            <person name="Barsukov I.L."/>
            <person name="Roberts G.C."/>
            <person name="Critchley D.R."/>
        </authorList>
    </citation>
    <scope>INTERACTION WITH TLN1</scope>
</reference>
<reference key="10">
    <citation type="journal article" date="2010" name="J. Cell Biol.">
        <title>Vinculin potentiates E-cadherin mechanosensing and is recruited to actin-anchored sites within adherens junctions in a myosin II-dependent manner.</title>
        <authorList>
            <person name="le Duc Q."/>
            <person name="Shi Q."/>
            <person name="Blonk I."/>
            <person name="Sonnenberg A."/>
            <person name="Wang N."/>
            <person name="Leckband D."/>
            <person name="de Rooij J."/>
        </authorList>
    </citation>
    <scope>FUNCTION</scope>
    <scope>SUBCELLULAR LOCATION</scope>
</reference>
<reference key="11">
    <citation type="journal article" date="2010" name="J. Cell Sci.">
        <title>Vinculin regulates cell-surface E-cadherin expression by binding to beta-catenin.</title>
        <authorList>
            <person name="Peng X."/>
            <person name="Cuff L.E."/>
            <person name="Lawton C.D."/>
            <person name="DeMali K.A."/>
        </authorList>
    </citation>
    <scope>FUNCTION</scope>
    <scope>SUBCELLULAR LOCATION</scope>
    <scope>INTERACTION WITH CTNNB1</scope>
</reference>
<reference key="12">
    <citation type="journal article" date="1999" name="Cell">
        <title>Crystal structure of the vinculin tail suggests a pathway for activation.</title>
        <authorList>
            <person name="Bakolitsa C."/>
            <person name="de Pereda J.M."/>
            <person name="Bagshaw C.R."/>
            <person name="Critchley D.R."/>
            <person name="Liddington R.C."/>
        </authorList>
    </citation>
    <scope>X-RAY CRYSTALLOGRAPHY (1.8 ANGSTROMS) OF 881-1135 OF ISOFORM 1</scope>
</reference>
<reference key="13">
    <citation type="journal article" date="2013" name="J. Biol. Chem.">
        <title>RIAM and vinculin binding to talin are mutually exclusive and regulate adhesion assembly and turnover.</title>
        <authorList>
            <person name="Goult B.T."/>
            <person name="Zacharchenko T."/>
            <person name="Bate N."/>
            <person name="Tsang R."/>
            <person name="Hey F."/>
            <person name="Gingras A.R."/>
            <person name="Elliott P.R."/>
            <person name="Roberts G.C."/>
            <person name="Ballestrem C."/>
            <person name="Critchley D.R."/>
            <person name="Barsukov I.L."/>
        </authorList>
    </citation>
    <scope>X-RAY CRYSTALLOGRAPHY (2.3 ANGSTROMS) OF 1-259 IN COMPLEX WITH APBB1IP</scope>
    <scope>INTERACTION WITH TLN1 AND APBB1IP</scope>
</reference>
<feature type="initiator methionine" description="Removed" evidence="2">
    <location>
        <position position="1"/>
    </location>
</feature>
<feature type="chain" id="PRO_0000064255" description="Vinculin">
    <location>
        <begin position="2"/>
        <end position="1135"/>
    </location>
</feature>
<feature type="repeat" description="1" evidence="5">
    <location>
        <begin position="259"/>
        <end position="369"/>
    </location>
</feature>
<feature type="repeat" description="2" evidence="5">
    <location>
        <begin position="370"/>
        <end position="479"/>
    </location>
</feature>
<feature type="repeat" description="3" evidence="5">
    <location>
        <begin position="480"/>
        <end position="589"/>
    </location>
</feature>
<feature type="region of interest" description="N-terminal globular head" evidence="1">
    <location>
        <begin position="2"/>
        <end position="835"/>
    </location>
</feature>
<feature type="region of interest" description="Talin-interaction" evidence="13">
    <location>
        <begin position="168"/>
        <end position="208"/>
    </location>
</feature>
<feature type="region of interest" description="3 X 112 AA tandem repeats" evidence="5">
    <location>
        <begin position="259"/>
        <end position="589"/>
    </location>
</feature>
<feature type="region of interest" description="Linker (Pro-rich)" evidence="1">
    <location>
        <begin position="836"/>
        <end position="878"/>
    </location>
</feature>
<feature type="region of interest" description="Disordered" evidence="6">
    <location>
        <begin position="837"/>
        <end position="888"/>
    </location>
</feature>
<feature type="region of interest" description="C-terminal tail" evidence="1">
    <location>
        <begin position="879"/>
        <end position="1135"/>
    </location>
</feature>
<feature type="region of interest" description="Facilitates phospholipid membrane insertion" evidence="4">
    <location>
        <begin position="1004"/>
        <end position="1047"/>
    </location>
</feature>
<feature type="region of interest" description="Facilitates phospholipid membrane insertion" evidence="4">
    <location>
        <begin position="1121"/>
        <end position="1135"/>
    </location>
</feature>
<feature type="compositionally biased region" description="Pro residues" evidence="6">
    <location>
        <begin position="860"/>
        <end position="876"/>
    </location>
</feature>
<feature type="modified residue" description="Phosphotyrosine" evidence="8">
    <location>
        <position position="100"/>
    </location>
</feature>
<feature type="modified residue" description="Phosphotyrosine" evidence="17">
    <location>
        <position position="537"/>
    </location>
</feature>
<feature type="modified residue" description="Phosphotyrosine" evidence="1">
    <location>
        <position position="822"/>
    </location>
</feature>
<feature type="modified residue" description="Phosphotyrosine; by SRC-type Tyr-kinases" evidence="8">
    <location>
        <position position="1134"/>
    </location>
</feature>
<feature type="splice variant" id="VSP_010772" description="In isoform 1." evidence="15 16">
    <location>
        <begin position="916"/>
        <end position="984"/>
    </location>
</feature>
<feature type="mutagenesis site" description="Some reduction of phosphorylation levels in platelets. Little change in cell spreading. Complete loss of phosphorylation. No change in subcellular location nor on in vitro actin binding. 40% decrease in cell spreading; when associated with F-1134." evidence="8">
    <original>Y</original>
    <variation>F</variation>
    <location>
        <position position="100"/>
    </location>
</feature>
<feature type="mutagenesis site" description="No change of phosphorylation levels in platelets." evidence="8">
    <original>Y</original>
    <variation>F</variation>
    <location>
        <position position="160"/>
    </location>
</feature>
<feature type="mutagenesis site" description="No change of phosphorylation levels in platelets." evidence="8">
    <original>Y</original>
    <variation>F</variation>
    <location>
        <position position="537"/>
    </location>
</feature>
<feature type="mutagenesis site" description="No change of phosphorylation levels in platelets." evidence="8">
    <original>Y</original>
    <variation>F</variation>
    <location>
        <position position="692"/>
    </location>
</feature>
<feature type="mutagenesis site" description="No change of phosphorylation levels in platelets." evidence="8">
    <original>Y</original>
    <variation>F</variation>
    <location>
        <position position="822"/>
    </location>
</feature>
<feature type="mutagenesis site" description="Greatly reduced phosphorylation levels in platelets. Little change in cell spreading. Complete loss of phosphorylation. No change in subcellular location nor on in vitro actin binding. 40% decrease in cell spreading; when associated with F-100." evidence="8">
    <original>Y</original>
    <variation>F</variation>
    <location>
        <position position="1134"/>
    </location>
</feature>
<feature type="sequence conflict" description="In Ref. 2 and 4; CAA68412." evidence="17" ref="2 4">
    <original>TAKLSD</original>
    <variation>QLSCQI</variation>
    <location>
        <begin position="442"/>
        <end position="447"/>
    </location>
</feature>
<feature type="sequence conflict" description="In Ref. 2 and 4; CAA68412." evidence="17" ref="2 4">
    <original>Q</original>
    <variation>H</variation>
    <location>
        <position position="701"/>
    </location>
</feature>
<feature type="sequence conflict" description="In Ref. 4; CAA68412." evidence="17" ref="4">
    <original>E</original>
    <variation>K</variation>
    <location>
        <position position="880"/>
    </location>
</feature>
<feature type="helix" evidence="22">
    <location>
        <begin position="7"/>
        <end position="28"/>
    </location>
</feature>
<feature type="turn" evidence="22">
    <location>
        <begin position="29"/>
        <end position="32"/>
    </location>
</feature>
<feature type="strand" evidence="22">
    <location>
        <begin position="33"/>
        <end position="35"/>
    </location>
</feature>
<feature type="helix" evidence="22">
    <location>
        <begin position="41"/>
        <end position="63"/>
    </location>
</feature>
<feature type="helix" evidence="22">
    <location>
        <begin position="68"/>
        <end position="73"/>
    </location>
</feature>
<feature type="helix" evidence="22">
    <location>
        <begin position="75"/>
        <end position="97"/>
    </location>
</feature>
<feature type="helix" evidence="22">
    <location>
        <begin position="102"/>
        <end position="146"/>
    </location>
</feature>
<feature type="helix" evidence="23">
    <location>
        <begin position="148"/>
        <end position="150"/>
    </location>
</feature>
<feature type="helix" evidence="22">
    <location>
        <begin position="154"/>
        <end position="181"/>
    </location>
</feature>
<feature type="helix" evidence="22">
    <location>
        <begin position="185"/>
        <end position="215"/>
    </location>
</feature>
<feature type="strand" evidence="21">
    <location>
        <begin position="218"/>
        <end position="221"/>
    </location>
</feature>
<feature type="helix" evidence="22">
    <location>
        <begin position="222"/>
        <end position="249"/>
    </location>
</feature>
<feature type="helix" evidence="23">
    <location>
        <begin position="253"/>
        <end position="255"/>
    </location>
</feature>
<feature type="helix" evidence="24">
    <location>
        <begin position="258"/>
        <end position="276"/>
    </location>
</feature>
<feature type="helix" evidence="24">
    <location>
        <begin position="278"/>
        <end position="280"/>
    </location>
</feature>
<feature type="helix" evidence="24">
    <location>
        <begin position="282"/>
        <end position="285"/>
    </location>
</feature>
<feature type="strand" evidence="24">
    <location>
        <begin position="292"/>
        <end position="296"/>
    </location>
</feature>
<feature type="helix" evidence="24">
    <location>
        <begin position="297"/>
        <end position="311"/>
    </location>
</feature>
<feature type="helix" evidence="24">
    <location>
        <begin position="316"/>
        <end position="340"/>
    </location>
</feature>
<feature type="helix" evidence="24">
    <location>
        <begin position="347"/>
        <end position="396"/>
    </location>
</feature>
<feature type="turn" evidence="24">
    <location>
        <begin position="403"/>
        <end position="405"/>
    </location>
</feature>
<feature type="helix" evidence="24">
    <location>
        <begin position="406"/>
        <end position="420"/>
    </location>
</feature>
<feature type="helix" evidence="24">
    <location>
        <begin position="425"/>
        <end position="450"/>
    </location>
</feature>
<feature type="turn" evidence="24">
    <location>
        <begin position="451"/>
        <end position="454"/>
    </location>
</feature>
<feature type="turn" evidence="24">
    <location>
        <begin position="457"/>
        <end position="460"/>
    </location>
</feature>
<feature type="helix" evidence="24">
    <location>
        <begin position="461"/>
        <end position="482"/>
    </location>
</feature>
<feature type="helix" evidence="24">
    <location>
        <begin position="493"/>
        <end position="501"/>
    </location>
</feature>
<feature type="turn" evidence="24">
    <location>
        <begin position="509"/>
        <end position="513"/>
    </location>
</feature>
<feature type="helix" evidence="24">
    <location>
        <begin position="514"/>
        <end position="530"/>
    </location>
</feature>
<feature type="helix" evidence="24">
    <location>
        <begin position="535"/>
        <end position="560"/>
    </location>
</feature>
<feature type="helix" evidence="24">
    <location>
        <begin position="566"/>
        <end position="569"/>
    </location>
</feature>
<feature type="helix" evidence="24">
    <location>
        <begin position="572"/>
        <end position="598"/>
    </location>
</feature>
<feature type="helix" evidence="24">
    <location>
        <begin position="604"/>
        <end position="614"/>
    </location>
</feature>
<feature type="helix" evidence="24">
    <location>
        <begin position="622"/>
        <end position="650"/>
    </location>
</feature>
<feature type="helix" evidence="24">
    <location>
        <begin position="655"/>
        <end position="684"/>
    </location>
</feature>
<feature type="helix" evidence="24">
    <location>
        <begin position="690"/>
        <end position="714"/>
    </location>
</feature>
<feature type="helix" evidence="24">
    <location>
        <begin position="719"/>
        <end position="741"/>
    </location>
</feature>
<feature type="turn" evidence="24">
    <location>
        <begin position="742"/>
        <end position="744"/>
    </location>
</feature>
<feature type="helix" evidence="24">
    <location>
        <begin position="747"/>
        <end position="751"/>
    </location>
</feature>
<feature type="strand" evidence="24">
    <location>
        <begin position="752"/>
        <end position="754"/>
    </location>
</feature>
<feature type="helix" evidence="24">
    <location>
        <begin position="755"/>
        <end position="773"/>
    </location>
</feature>
<feature type="helix" evidence="24">
    <location>
        <begin position="777"/>
        <end position="791"/>
    </location>
</feature>
<feature type="helix" evidence="24">
    <location>
        <begin position="795"/>
        <end position="797"/>
    </location>
</feature>
<feature type="turn" evidence="24">
    <location>
        <begin position="799"/>
        <end position="804"/>
    </location>
</feature>
<feature type="helix" evidence="24">
    <location>
        <begin position="811"/>
        <end position="814"/>
    </location>
</feature>
<feature type="helix" evidence="24">
    <location>
        <begin position="817"/>
        <end position="835"/>
    </location>
</feature>
<feature type="strand" evidence="24">
    <location>
        <begin position="864"/>
        <end position="866"/>
    </location>
</feature>
<feature type="strand" evidence="20">
    <location>
        <begin position="887"/>
        <end position="890"/>
    </location>
</feature>
<feature type="strand" evidence="20">
    <location>
        <begin position="892"/>
        <end position="894"/>
    </location>
</feature>
<feature type="helix" evidence="24">
    <location>
        <begin position="896"/>
        <end position="910"/>
    </location>
</feature>
<feature type="helix" evidence="19">
    <location>
        <begin position="961"/>
        <end position="964"/>
    </location>
</feature>
<feature type="helix" evidence="19">
    <location>
        <begin position="966"/>
        <end position="978"/>
    </location>
</feature>
<feature type="helix" evidence="19">
    <location>
        <begin position="987"/>
        <end position="1005"/>
    </location>
</feature>
<feature type="helix" evidence="19">
    <location>
        <begin position="1010"/>
        <end position="1012"/>
    </location>
</feature>
<feature type="helix" evidence="19">
    <location>
        <begin position="1013"/>
        <end position="1040"/>
    </location>
</feature>
<feature type="helix" evidence="19">
    <location>
        <begin position="1044"/>
        <end position="1054"/>
    </location>
</feature>
<feature type="helix" evidence="19">
    <location>
        <begin position="1057"/>
        <end position="1074"/>
    </location>
</feature>
<feature type="strand" evidence="20">
    <location>
        <begin position="1075"/>
        <end position="1077"/>
    </location>
</feature>
<feature type="helix" evidence="19">
    <location>
        <begin position="1082"/>
        <end position="1113"/>
    </location>
</feature>
<feature type="helix" evidence="19">
    <location>
        <begin position="1121"/>
        <end position="1123"/>
    </location>
</feature>
<protein>
    <recommendedName>
        <fullName>Vinculin</fullName>
    </recommendedName>
    <alternativeName>
        <fullName>Metavinculin</fullName>
    </alternativeName>
</protein>
<dbReference type="EMBL" id="J04126">
    <property type="protein sequence ID" value="AAA49136.1"/>
    <property type="molecule type" value="mRNA"/>
</dbReference>
<dbReference type="EMBL" id="M87837">
    <property type="protein sequence ID" value="AAA49135.1"/>
    <property type="molecule type" value="Genomic_DNA"/>
</dbReference>
<dbReference type="EMBL" id="Y00312">
    <property type="protein sequence ID" value="CAA68412.1"/>
    <property type="molecule type" value="mRNA"/>
</dbReference>
<dbReference type="PIR" id="A31346">
    <property type="entry name" value="A29997"/>
</dbReference>
<dbReference type="RefSeq" id="NP_990772.1">
    <molecule id="P12003-1"/>
    <property type="nucleotide sequence ID" value="NM_205441.3"/>
</dbReference>
<dbReference type="RefSeq" id="XP_015143689.1">
    <molecule id="P12003-2"/>
    <property type="nucleotide sequence ID" value="XM_015288203.3"/>
</dbReference>
<dbReference type="RefSeq" id="XP_046775917.1">
    <molecule id="P12003-2"/>
    <property type="nucleotide sequence ID" value="XM_046919961.1"/>
</dbReference>
<dbReference type="PDB" id="1QKR">
    <property type="method" value="X-ray"/>
    <property type="resolution" value="1.80 A"/>
    <property type="chains" value="A/B=879-1135"/>
</dbReference>
<dbReference type="PDB" id="1ST6">
    <property type="method" value="X-ray"/>
    <property type="resolution" value="3.10 A"/>
    <property type="chains" value="A=1-1135"/>
</dbReference>
<dbReference type="PDB" id="1T01">
    <property type="method" value="X-ray"/>
    <property type="resolution" value="2.06 A"/>
    <property type="chains" value="A=1-254"/>
</dbReference>
<dbReference type="PDB" id="1U6H">
    <property type="method" value="X-ray"/>
    <property type="resolution" value="2.38 A"/>
    <property type="chains" value="A=1-259"/>
</dbReference>
<dbReference type="PDB" id="1XWJ">
    <property type="method" value="X-ray"/>
    <property type="resolution" value="2.60 A"/>
    <property type="chains" value="A=2-259"/>
</dbReference>
<dbReference type="PDB" id="1ZVZ">
    <property type="method" value="X-ray"/>
    <property type="resolution" value="1.80 A"/>
    <property type="chains" value="A=2-259"/>
</dbReference>
<dbReference type="PDB" id="1ZW2">
    <property type="method" value="X-ray"/>
    <property type="resolution" value="2.10 A"/>
    <property type="chains" value="A=2-259"/>
</dbReference>
<dbReference type="PDB" id="1ZW3">
    <property type="method" value="X-ray"/>
    <property type="resolution" value="3.30 A"/>
    <property type="chains" value="A=2-259"/>
</dbReference>
<dbReference type="PDB" id="2GDC">
    <property type="method" value="X-ray"/>
    <property type="resolution" value="2.74 A"/>
    <property type="chains" value="A=1-266"/>
</dbReference>
<dbReference type="PDB" id="3JBI">
    <property type="method" value="EM"/>
    <property type="resolution" value="8.50 A"/>
    <property type="chains" value="V=879-1130"/>
</dbReference>
<dbReference type="PDB" id="3ZDL">
    <property type="method" value="X-ray"/>
    <property type="resolution" value="2.30 A"/>
    <property type="chains" value="A=1-259"/>
</dbReference>
<dbReference type="PDB" id="4E17">
    <property type="method" value="X-ray"/>
    <property type="resolution" value="2.30 A"/>
    <property type="chains" value="A=1-259"/>
</dbReference>
<dbReference type="PDB" id="4E18">
    <property type="method" value="X-ray"/>
    <property type="resolution" value="2.40 A"/>
    <property type="chains" value="A=1-259"/>
</dbReference>
<dbReference type="PDB" id="6FQ4">
    <property type="method" value="X-ray"/>
    <property type="resolution" value="2.89 A"/>
    <property type="chains" value="A=1-259"/>
</dbReference>
<dbReference type="PDB" id="6NR7">
    <property type="method" value="X-ray"/>
    <property type="resolution" value="3.00 A"/>
    <property type="chains" value="A=1-1135"/>
</dbReference>
<dbReference type="PDBsum" id="1QKR"/>
<dbReference type="PDBsum" id="1ST6"/>
<dbReference type="PDBsum" id="1T01"/>
<dbReference type="PDBsum" id="1U6H"/>
<dbReference type="PDBsum" id="1XWJ"/>
<dbReference type="PDBsum" id="1ZVZ"/>
<dbReference type="PDBsum" id="1ZW2"/>
<dbReference type="PDBsum" id="1ZW3"/>
<dbReference type="PDBsum" id="2GDC"/>
<dbReference type="PDBsum" id="3JBI"/>
<dbReference type="PDBsum" id="3ZDL"/>
<dbReference type="PDBsum" id="4E17"/>
<dbReference type="PDBsum" id="4E18"/>
<dbReference type="PDBsum" id="6FQ4"/>
<dbReference type="PDBsum" id="6NR7"/>
<dbReference type="EMDB" id="EMD-6446"/>
<dbReference type="EMDB" id="EMD-6449"/>
<dbReference type="EMDB" id="EMD-6450"/>
<dbReference type="EMDB" id="EMD-6451"/>
<dbReference type="SMR" id="P12003"/>
<dbReference type="BioGRID" id="676671">
    <property type="interactions" value="2"/>
</dbReference>
<dbReference type="DIP" id="DIP-35191N"/>
<dbReference type="ELM" id="P12003"/>
<dbReference type="FunCoup" id="P12003">
    <property type="interactions" value="2242"/>
</dbReference>
<dbReference type="IntAct" id="P12003">
    <property type="interactions" value="16"/>
</dbReference>
<dbReference type="MINT" id="P12003"/>
<dbReference type="STRING" id="9031.ENSGALP00000008131"/>
<dbReference type="iPTMnet" id="P12003"/>
<dbReference type="PaxDb" id="9031-ENSGALP00000008131"/>
<dbReference type="DNASU" id="396422"/>
<dbReference type="Ensembl" id="ENSGALT00010054688.1">
    <molecule id="P12003-2"/>
    <property type="protein sequence ID" value="ENSGALP00010033042.1"/>
    <property type="gene ID" value="ENSGALG00010022474.1"/>
</dbReference>
<dbReference type="GeneID" id="396422"/>
<dbReference type="KEGG" id="gga:396422"/>
<dbReference type="CTD" id="7414"/>
<dbReference type="VEuPathDB" id="HostDB:geneid_396422"/>
<dbReference type="eggNOG" id="KOG3681">
    <property type="taxonomic scope" value="Eukaryota"/>
</dbReference>
<dbReference type="GeneTree" id="ENSGT01030000234543"/>
<dbReference type="HOGENOM" id="CLU_012338_0_0_1"/>
<dbReference type="InParanoid" id="P12003"/>
<dbReference type="OrthoDB" id="29742at2759"/>
<dbReference type="PhylomeDB" id="P12003"/>
<dbReference type="Reactome" id="R-GGA-114608">
    <property type="pathway name" value="Platelet degranulation"/>
</dbReference>
<dbReference type="Reactome" id="R-GGA-445355">
    <property type="pathway name" value="Smooth Muscle Contraction"/>
</dbReference>
<dbReference type="Reactome" id="R-GGA-5674135">
    <property type="pathway name" value="MAP2K and MAPK activation"/>
</dbReference>
<dbReference type="Reactome" id="R-GGA-6798695">
    <property type="pathway name" value="Neutrophil degranulation"/>
</dbReference>
<dbReference type="SABIO-RK" id="P12003"/>
<dbReference type="EvolutionaryTrace" id="P12003"/>
<dbReference type="PRO" id="PR:P12003"/>
<dbReference type="Proteomes" id="UP000000539">
    <property type="component" value="Chromosome 6"/>
</dbReference>
<dbReference type="Bgee" id="ENSGALG00000005079">
    <property type="expression patterns" value="Expressed in colon and 14 other cell types or tissues"/>
</dbReference>
<dbReference type="GO" id="GO:0015629">
    <property type="term" value="C:actin cytoskeleton"/>
    <property type="evidence" value="ECO:0000314"/>
    <property type="project" value="AgBase"/>
</dbReference>
<dbReference type="GO" id="GO:0005912">
    <property type="term" value="C:adherens junction"/>
    <property type="evidence" value="ECO:0000250"/>
    <property type="project" value="UniProtKB"/>
</dbReference>
<dbReference type="GO" id="GO:0005903">
    <property type="term" value="C:brush border"/>
    <property type="evidence" value="ECO:0000314"/>
    <property type="project" value="AgBase"/>
</dbReference>
<dbReference type="GO" id="GO:0042995">
    <property type="term" value="C:cell projection"/>
    <property type="evidence" value="ECO:0007669"/>
    <property type="project" value="UniProtKB-KW"/>
</dbReference>
<dbReference type="GO" id="GO:0044291">
    <property type="term" value="C:cell-cell contact zone"/>
    <property type="evidence" value="ECO:0000318"/>
    <property type="project" value="GO_Central"/>
</dbReference>
<dbReference type="GO" id="GO:0005911">
    <property type="term" value="C:cell-cell junction"/>
    <property type="evidence" value="ECO:0000314"/>
    <property type="project" value="UniProtKB"/>
</dbReference>
<dbReference type="GO" id="GO:0043034">
    <property type="term" value="C:costamere"/>
    <property type="evidence" value="ECO:0000250"/>
    <property type="project" value="UniProtKB"/>
</dbReference>
<dbReference type="GO" id="GO:0005737">
    <property type="term" value="C:cytoplasm"/>
    <property type="evidence" value="ECO:0000318"/>
    <property type="project" value="GO_Central"/>
</dbReference>
<dbReference type="GO" id="GO:0005856">
    <property type="term" value="C:cytoskeleton"/>
    <property type="evidence" value="ECO:0000318"/>
    <property type="project" value="GO_Central"/>
</dbReference>
<dbReference type="GO" id="GO:0005916">
    <property type="term" value="C:fascia adherens"/>
    <property type="evidence" value="ECO:0007669"/>
    <property type="project" value="Ensembl"/>
</dbReference>
<dbReference type="GO" id="GO:0005925">
    <property type="term" value="C:focal adhesion"/>
    <property type="evidence" value="ECO:0000314"/>
    <property type="project" value="AgBase"/>
</dbReference>
<dbReference type="GO" id="GO:0090637">
    <property type="term" value="C:inner dense plaque of desmosome"/>
    <property type="evidence" value="ECO:0000314"/>
    <property type="project" value="AgBase"/>
</dbReference>
<dbReference type="GO" id="GO:0005743">
    <property type="term" value="C:mitochondrial inner membrane"/>
    <property type="evidence" value="ECO:0000314"/>
    <property type="project" value="UniProtKB"/>
</dbReference>
<dbReference type="GO" id="GO:0005927">
    <property type="term" value="C:muscle tendon junction"/>
    <property type="evidence" value="ECO:0000314"/>
    <property type="project" value="AgBase"/>
</dbReference>
<dbReference type="GO" id="GO:0031594">
    <property type="term" value="C:neuromuscular junction"/>
    <property type="evidence" value="ECO:0000314"/>
    <property type="project" value="AgBase"/>
</dbReference>
<dbReference type="GO" id="GO:0090636">
    <property type="term" value="C:outer dense plaque of desmosome"/>
    <property type="evidence" value="ECO:0000314"/>
    <property type="project" value="AgBase"/>
</dbReference>
<dbReference type="GO" id="GO:0005886">
    <property type="term" value="C:plasma membrane"/>
    <property type="evidence" value="ECO:0000314"/>
    <property type="project" value="AgBase"/>
</dbReference>
<dbReference type="GO" id="GO:0061826">
    <property type="term" value="C:podosome ring"/>
    <property type="evidence" value="ECO:0007669"/>
    <property type="project" value="Ensembl"/>
</dbReference>
<dbReference type="GO" id="GO:0032991">
    <property type="term" value="C:protein-containing complex"/>
    <property type="evidence" value="ECO:0007669"/>
    <property type="project" value="Ensembl"/>
</dbReference>
<dbReference type="GO" id="GO:0042383">
    <property type="term" value="C:sarcolemma"/>
    <property type="evidence" value="ECO:0000314"/>
    <property type="project" value="AgBase"/>
</dbReference>
<dbReference type="GO" id="GO:0098723">
    <property type="term" value="C:skeletal muscle myofibril"/>
    <property type="evidence" value="ECO:0000314"/>
    <property type="project" value="AgBase"/>
</dbReference>
<dbReference type="GO" id="GO:0001725">
    <property type="term" value="C:stress fiber"/>
    <property type="evidence" value="ECO:0000314"/>
    <property type="project" value="AgBase"/>
</dbReference>
<dbReference type="GO" id="GO:1990357">
    <property type="term" value="C:terminal web"/>
    <property type="evidence" value="ECO:0000314"/>
    <property type="project" value="AgBase"/>
</dbReference>
<dbReference type="GO" id="GO:0030018">
    <property type="term" value="C:Z disc"/>
    <property type="evidence" value="ECO:0000314"/>
    <property type="project" value="AgBase"/>
</dbReference>
<dbReference type="GO" id="GO:0005915">
    <property type="term" value="C:zonula adherens"/>
    <property type="evidence" value="ECO:0000314"/>
    <property type="project" value="AgBase"/>
</dbReference>
<dbReference type="GO" id="GO:0051015">
    <property type="term" value="F:actin filament binding"/>
    <property type="evidence" value="ECO:0007669"/>
    <property type="project" value="InterPro"/>
</dbReference>
<dbReference type="GO" id="GO:0051393">
    <property type="term" value="F:alpha-actinin binding"/>
    <property type="evidence" value="ECO:0000314"/>
    <property type="project" value="AgBase"/>
</dbReference>
<dbReference type="GO" id="GO:0045294">
    <property type="term" value="F:alpha-catenin binding"/>
    <property type="evidence" value="ECO:0000314"/>
    <property type="project" value="BHF-UCL"/>
</dbReference>
<dbReference type="GO" id="GO:0008013">
    <property type="term" value="F:beta-catenin binding"/>
    <property type="evidence" value="ECO:0000314"/>
    <property type="project" value="BHF-UCL"/>
</dbReference>
<dbReference type="GO" id="GO:0045296">
    <property type="term" value="F:cadherin binding"/>
    <property type="evidence" value="ECO:0000353"/>
    <property type="project" value="BHF-UCL"/>
</dbReference>
<dbReference type="GO" id="GO:0002162">
    <property type="term" value="F:dystroglycan binding"/>
    <property type="evidence" value="ECO:0007669"/>
    <property type="project" value="Ensembl"/>
</dbReference>
<dbReference type="GO" id="GO:0051371">
    <property type="term" value="F:muscle alpha-actinin binding"/>
    <property type="evidence" value="ECO:0000315"/>
    <property type="project" value="AgBase"/>
</dbReference>
<dbReference type="GO" id="GO:0042803">
    <property type="term" value="F:protein homodimerization activity"/>
    <property type="evidence" value="ECO:0000314"/>
    <property type="project" value="AgBase"/>
</dbReference>
<dbReference type="GO" id="GO:0097110">
    <property type="term" value="F:scaffold protein binding"/>
    <property type="evidence" value="ECO:0000353"/>
    <property type="project" value="AgBase"/>
</dbReference>
<dbReference type="GO" id="GO:0005198">
    <property type="term" value="F:structural molecule activity"/>
    <property type="evidence" value="ECO:0007669"/>
    <property type="project" value="InterPro"/>
</dbReference>
<dbReference type="GO" id="GO:0031625">
    <property type="term" value="F:ubiquitin protein ligase binding"/>
    <property type="evidence" value="ECO:0007669"/>
    <property type="project" value="Ensembl"/>
</dbReference>
<dbReference type="GO" id="GO:0017166">
    <property type="term" value="F:vinculin binding"/>
    <property type="evidence" value="ECO:0000314"/>
    <property type="project" value="AgBase"/>
</dbReference>
<dbReference type="GO" id="GO:0034333">
    <property type="term" value="P:adherens junction assembly"/>
    <property type="evidence" value="ECO:0000314"/>
    <property type="project" value="BHF-UCL"/>
</dbReference>
<dbReference type="GO" id="GO:0043297">
    <property type="term" value="P:apical junction assembly"/>
    <property type="evidence" value="ECO:0007669"/>
    <property type="project" value="Ensembl"/>
</dbReference>
<dbReference type="GO" id="GO:0048675">
    <property type="term" value="P:axon extension"/>
    <property type="evidence" value="ECO:0007669"/>
    <property type="project" value="Ensembl"/>
</dbReference>
<dbReference type="GO" id="GO:0007155">
    <property type="term" value="P:cell adhesion"/>
    <property type="evidence" value="ECO:0000318"/>
    <property type="project" value="GO_Central"/>
</dbReference>
<dbReference type="GO" id="GO:0090136">
    <property type="term" value="P:epithelial cell-cell adhesion"/>
    <property type="evidence" value="ECO:0000314"/>
    <property type="project" value="BHF-UCL"/>
</dbReference>
<dbReference type="GO" id="GO:0030032">
    <property type="term" value="P:lamellipodium assembly"/>
    <property type="evidence" value="ECO:0000250"/>
    <property type="project" value="UniProtKB"/>
</dbReference>
<dbReference type="GO" id="GO:0002009">
    <property type="term" value="P:morphogenesis of an epithelium"/>
    <property type="evidence" value="ECO:0000314"/>
    <property type="project" value="BHF-UCL"/>
</dbReference>
<dbReference type="GO" id="GO:0034394">
    <property type="term" value="P:protein localization to cell surface"/>
    <property type="evidence" value="ECO:0007669"/>
    <property type="project" value="Ensembl"/>
</dbReference>
<dbReference type="GO" id="GO:0030334">
    <property type="term" value="P:regulation of cell migration"/>
    <property type="evidence" value="ECO:0000250"/>
    <property type="project" value="UniProtKB"/>
</dbReference>
<dbReference type="GO" id="GO:1903140">
    <property type="term" value="P:regulation of establishment of endothelial barrier"/>
    <property type="evidence" value="ECO:0007669"/>
    <property type="project" value="Ensembl"/>
</dbReference>
<dbReference type="GO" id="GO:0051893">
    <property type="term" value="P:regulation of focal adhesion assembly"/>
    <property type="evidence" value="ECO:0007669"/>
    <property type="project" value="Ensembl"/>
</dbReference>
<dbReference type="GO" id="GO:1904702">
    <property type="term" value="P:regulation of protein localization to adherens junction"/>
    <property type="evidence" value="ECO:0007669"/>
    <property type="project" value="Ensembl"/>
</dbReference>
<dbReference type="FunFam" id="1.20.120.230:FF:000041">
    <property type="entry name" value="Vinculin"/>
    <property type="match status" value="1"/>
</dbReference>
<dbReference type="FunFam" id="1.20.120.230:FF:000010">
    <property type="entry name" value="Vinculin a"/>
    <property type="match status" value="1"/>
</dbReference>
<dbReference type="FunFam" id="1.20.120.810:FF:000001">
    <property type="entry name" value="Vinculin a"/>
    <property type="match status" value="1"/>
</dbReference>
<dbReference type="FunFam" id="1.20.120.230:FF:000013">
    <property type="entry name" value="Vinculin b"/>
    <property type="match status" value="1"/>
</dbReference>
<dbReference type="FunFam" id="1.20.120.810:FF:000002">
    <property type="entry name" value="Vinculin b"/>
    <property type="match status" value="1"/>
</dbReference>
<dbReference type="FunFam" id="1.20.120.810:FF:000003">
    <property type="entry name" value="Vinculin b"/>
    <property type="match status" value="1"/>
</dbReference>
<dbReference type="Gene3D" id="1.20.120.230">
    <property type="entry name" value="Alpha-catenin/vinculin-like"/>
    <property type="match status" value="3"/>
</dbReference>
<dbReference type="Gene3D" id="1.20.120.810">
    <property type="entry name" value="Vinculin, Vh2 four-helix bundle"/>
    <property type="match status" value="3"/>
</dbReference>
<dbReference type="InterPro" id="IPR036723">
    <property type="entry name" value="Alpha-catenin/vinculin-like_sf"/>
</dbReference>
<dbReference type="InterPro" id="IPR017997">
    <property type="entry name" value="Vinculin"/>
</dbReference>
<dbReference type="InterPro" id="IPR006077">
    <property type="entry name" value="Vinculin/catenin"/>
</dbReference>
<dbReference type="InterPro" id="IPR000633">
    <property type="entry name" value="Vinculin_CS"/>
</dbReference>
<dbReference type="PANTHER" id="PTHR46180">
    <property type="entry name" value="VINCULIN"/>
    <property type="match status" value="1"/>
</dbReference>
<dbReference type="Pfam" id="PF01044">
    <property type="entry name" value="Vinculin"/>
    <property type="match status" value="1"/>
</dbReference>
<dbReference type="PRINTS" id="PR00806">
    <property type="entry name" value="VINCULIN"/>
</dbReference>
<dbReference type="SUPFAM" id="SSF47220">
    <property type="entry name" value="alpha-catenin/vinculin-like"/>
    <property type="match status" value="8"/>
</dbReference>
<dbReference type="PROSITE" id="PS00663">
    <property type="entry name" value="VINCULIN_1"/>
    <property type="match status" value="1"/>
</dbReference>
<dbReference type="PROSITE" id="PS00664">
    <property type="entry name" value="VINCULIN_2"/>
    <property type="match status" value="3"/>
</dbReference>